<dbReference type="EMBL" id="CP000263">
    <property type="protein sequence ID" value="ABJ90697.1"/>
    <property type="molecule type" value="Genomic_DNA"/>
</dbReference>
<dbReference type="RefSeq" id="WP_011672616.1">
    <property type="nucleotide sequence ID" value="NC_008513.1"/>
</dbReference>
<dbReference type="SMR" id="Q057K2"/>
<dbReference type="STRING" id="372461.BCc_228"/>
<dbReference type="KEGG" id="bcc:BCc_228"/>
<dbReference type="eggNOG" id="COG0184">
    <property type="taxonomic scope" value="Bacteria"/>
</dbReference>
<dbReference type="HOGENOM" id="CLU_148518_0_0_6"/>
<dbReference type="OrthoDB" id="9799262at2"/>
<dbReference type="Proteomes" id="UP000000669">
    <property type="component" value="Chromosome"/>
</dbReference>
<dbReference type="GO" id="GO:0022627">
    <property type="term" value="C:cytosolic small ribosomal subunit"/>
    <property type="evidence" value="ECO:0007669"/>
    <property type="project" value="TreeGrafter"/>
</dbReference>
<dbReference type="GO" id="GO:0019843">
    <property type="term" value="F:rRNA binding"/>
    <property type="evidence" value="ECO:0007669"/>
    <property type="project" value="UniProtKB-UniRule"/>
</dbReference>
<dbReference type="GO" id="GO:0003735">
    <property type="term" value="F:structural constituent of ribosome"/>
    <property type="evidence" value="ECO:0007669"/>
    <property type="project" value="InterPro"/>
</dbReference>
<dbReference type="GO" id="GO:0006412">
    <property type="term" value="P:translation"/>
    <property type="evidence" value="ECO:0007669"/>
    <property type="project" value="UniProtKB-UniRule"/>
</dbReference>
<dbReference type="Gene3D" id="6.10.250.3130">
    <property type="match status" value="1"/>
</dbReference>
<dbReference type="Gene3D" id="1.10.287.10">
    <property type="entry name" value="S15/NS1, RNA-binding"/>
    <property type="match status" value="1"/>
</dbReference>
<dbReference type="HAMAP" id="MF_01343_B">
    <property type="entry name" value="Ribosomal_uS15_B"/>
    <property type="match status" value="1"/>
</dbReference>
<dbReference type="InterPro" id="IPR000589">
    <property type="entry name" value="Ribosomal_uS15"/>
</dbReference>
<dbReference type="InterPro" id="IPR005290">
    <property type="entry name" value="Ribosomal_uS15_bac-type"/>
</dbReference>
<dbReference type="InterPro" id="IPR009068">
    <property type="entry name" value="uS15_NS1_RNA-bd_sf"/>
</dbReference>
<dbReference type="NCBIfam" id="TIGR00952">
    <property type="entry name" value="S15_bact"/>
    <property type="match status" value="1"/>
</dbReference>
<dbReference type="PANTHER" id="PTHR23321">
    <property type="entry name" value="RIBOSOMAL PROTEIN S15, BACTERIAL AND ORGANELLAR"/>
    <property type="match status" value="1"/>
</dbReference>
<dbReference type="PANTHER" id="PTHR23321:SF26">
    <property type="entry name" value="SMALL RIBOSOMAL SUBUNIT PROTEIN US15M"/>
    <property type="match status" value="1"/>
</dbReference>
<dbReference type="Pfam" id="PF00312">
    <property type="entry name" value="Ribosomal_S15"/>
    <property type="match status" value="1"/>
</dbReference>
<dbReference type="SMART" id="SM01387">
    <property type="entry name" value="Ribosomal_S15"/>
    <property type="match status" value="1"/>
</dbReference>
<dbReference type="SUPFAM" id="SSF47060">
    <property type="entry name" value="S15/NS1 RNA-binding domain"/>
    <property type="match status" value="1"/>
</dbReference>
<dbReference type="PROSITE" id="PS00362">
    <property type="entry name" value="RIBOSOMAL_S15"/>
    <property type="match status" value="1"/>
</dbReference>
<protein>
    <recommendedName>
        <fullName evidence="1">Small ribosomal subunit protein uS15</fullName>
    </recommendedName>
    <alternativeName>
        <fullName evidence="2">30S ribosomal protein S15</fullName>
    </alternativeName>
</protein>
<gene>
    <name evidence="1" type="primary">rpsO</name>
    <name type="ordered locus">BCc_228</name>
</gene>
<name>RS15_BUCCC</name>
<keyword id="KW-1185">Reference proteome</keyword>
<keyword id="KW-0687">Ribonucleoprotein</keyword>
<keyword id="KW-0689">Ribosomal protein</keyword>
<keyword id="KW-0694">RNA-binding</keyword>
<keyword id="KW-0699">rRNA-binding</keyword>
<reference key="1">
    <citation type="journal article" date="2006" name="Science">
        <title>A small microbial genome: the end of a long symbiotic relationship?</title>
        <authorList>
            <person name="Perez-Brocal V."/>
            <person name="Gil R."/>
            <person name="Ramos S."/>
            <person name="Lamelas A."/>
            <person name="Postigo M."/>
            <person name="Michelena J.M."/>
            <person name="Silva F.J."/>
            <person name="Moya A."/>
            <person name="Latorre A."/>
        </authorList>
    </citation>
    <scope>NUCLEOTIDE SEQUENCE [LARGE SCALE GENOMIC DNA]</scope>
    <source>
        <strain>Cc</strain>
    </source>
</reference>
<organism>
    <name type="scientific">Buchnera aphidicola subsp. Cinara cedri (strain Cc)</name>
    <dbReference type="NCBI Taxonomy" id="372461"/>
    <lineage>
        <taxon>Bacteria</taxon>
        <taxon>Pseudomonadati</taxon>
        <taxon>Pseudomonadota</taxon>
        <taxon>Gammaproteobacteria</taxon>
        <taxon>Enterobacterales</taxon>
        <taxon>Erwiniaceae</taxon>
        <taxon>Buchnera</taxon>
    </lineage>
</organism>
<proteinExistence type="inferred from homology"/>
<sequence length="89" mass="10568">MLKDTLKVKNLVMKYGKSYLNTGSSSVQIALLTRKINYLQKHFILHKEDHCGRKGLLNMVSRRRKLLDYLKSNQYENYLFLIKKLGLRH</sequence>
<feature type="chain" id="PRO_1000054757" description="Small ribosomal subunit protein uS15">
    <location>
        <begin position="1"/>
        <end position="89"/>
    </location>
</feature>
<comment type="function">
    <text evidence="1">One of the primary rRNA binding proteins, it binds directly to 16S rRNA where it helps nucleate assembly of the platform of the 30S subunit by binding and bridging several RNA helices of the 16S rRNA.</text>
</comment>
<comment type="function">
    <text evidence="1">Forms an intersubunit bridge (bridge B4) with the 23S rRNA of the 50S subunit in the ribosome.</text>
</comment>
<comment type="subunit">
    <text evidence="1">Part of the 30S ribosomal subunit. Forms a bridge to the 50S subunit in the 70S ribosome, contacting the 23S rRNA.</text>
</comment>
<comment type="similarity">
    <text evidence="1">Belongs to the universal ribosomal protein uS15 family.</text>
</comment>
<accession>Q057K2</accession>
<evidence type="ECO:0000255" key="1">
    <source>
        <dbReference type="HAMAP-Rule" id="MF_01343"/>
    </source>
</evidence>
<evidence type="ECO:0000305" key="2"/>